<proteinExistence type="inferred from homology"/>
<accession>Q8SEW8</accession>
<organism>
    <name type="scientific">Coturnix japonica</name>
    <name type="common">Japanese quail</name>
    <name type="synonym">Coturnix coturnix japonica</name>
    <dbReference type="NCBI Taxonomy" id="93934"/>
    <lineage>
        <taxon>Eukaryota</taxon>
        <taxon>Metazoa</taxon>
        <taxon>Chordata</taxon>
        <taxon>Craniata</taxon>
        <taxon>Vertebrata</taxon>
        <taxon>Euteleostomi</taxon>
        <taxon>Archelosauria</taxon>
        <taxon>Archosauria</taxon>
        <taxon>Dinosauria</taxon>
        <taxon>Saurischia</taxon>
        <taxon>Theropoda</taxon>
        <taxon>Coelurosauria</taxon>
        <taxon>Aves</taxon>
        <taxon>Neognathae</taxon>
        <taxon>Galloanserae</taxon>
        <taxon>Galliformes</taxon>
        <taxon>Phasianidae</taxon>
        <taxon>Perdicinae</taxon>
        <taxon>Coturnix</taxon>
    </lineage>
</organism>
<evidence type="ECO:0000250" key="1">
    <source>
        <dbReference type="UniProtKB" id="P00415"/>
    </source>
</evidence>
<evidence type="ECO:0000250" key="2">
    <source>
        <dbReference type="UniProtKB" id="P00420"/>
    </source>
</evidence>
<evidence type="ECO:0000305" key="3"/>
<comment type="function">
    <text evidence="2">Component of the cytochrome c oxidase, the last enzyme in the mitochondrial electron transport chain which drives oxidative phosphorylation. The respiratory chain contains 3 multisubunit complexes succinate dehydrogenase (complex II, CII), ubiquinol-cytochrome c oxidoreductase (cytochrome b-c1 complex, complex III, CIII) and cytochrome c oxidase (complex IV, CIV), that cooperate to transfer electrons derived from NADH and succinate to molecular oxygen, creating an electrochemical gradient over the inner membrane that drives transmembrane transport and the ATP synthase. Cytochrome c oxidase is the component of the respiratory chain that catalyzes the reduction of oxygen to water. Electrons originating from reduced cytochrome c in the intermembrane space (IMS) are transferred via the dinuclear copper A center (CU(A)) of subunit 2 and heme A of subunit 1 to the active site in subunit 1, a binuclear center (BNC) formed by heme A3 and copper B (CU(B)). The BNC reduces molecular oxygen to 2 water molecules using 4 electrons from cytochrome c in the IMS and 4 protons from the mitochondrial matrix.</text>
</comment>
<comment type="catalytic activity">
    <reaction evidence="2">
        <text>4 Fe(II)-[cytochrome c] + O2 + 8 H(+)(in) = 4 Fe(III)-[cytochrome c] + 2 H2O + 4 H(+)(out)</text>
        <dbReference type="Rhea" id="RHEA:11436"/>
        <dbReference type="Rhea" id="RHEA-COMP:10350"/>
        <dbReference type="Rhea" id="RHEA-COMP:14399"/>
        <dbReference type="ChEBI" id="CHEBI:15377"/>
        <dbReference type="ChEBI" id="CHEBI:15378"/>
        <dbReference type="ChEBI" id="CHEBI:15379"/>
        <dbReference type="ChEBI" id="CHEBI:29033"/>
        <dbReference type="ChEBI" id="CHEBI:29034"/>
        <dbReference type="EC" id="7.1.1.9"/>
    </reaction>
    <physiologicalReaction direction="left-to-right" evidence="2">
        <dbReference type="Rhea" id="RHEA:11437"/>
    </physiologicalReaction>
</comment>
<comment type="subunit">
    <text evidence="1">Component of the cytochrome c oxidase (complex IV, CIV), a multisubunit enzyme composed of 14 subunits. The complex is composed of a catalytic core of 3 subunits MT-CO1, MT-CO2 and MT-CO3, encoded in the mitochondrial DNA, and 11 supernumerary subunits COX4I, COX5A, COX5B, COX6A, COX6B, COX6C, COX7A, COX7B, COX7C, COX8 and NDUFA4, which are encoded in the nuclear genome. The complex exists as a monomer or a dimer and forms supercomplexes (SCs) in the inner mitochondrial membrane with NADH-ubiquinone oxidoreductase (complex I, CI) and ubiquinol-cytochrome c oxidoreductase (cytochrome b-c1 complex, complex III, CIII), resulting in different assemblies (supercomplex SCI(1)III(2)IV(1) and megacomplex MCI(2)III(2)IV(2)).</text>
</comment>
<comment type="subcellular location">
    <subcellularLocation>
        <location evidence="1">Mitochondrion inner membrane</location>
        <topology evidence="1">Multi-pass membrane protein</topology>
    </subcellularLocation>
</comment>
<comment type="similarity">
    <text evidence="3">Belongs to the cytochrome c oxidase subunit 3 family.</text>
</comment>
<protein>
    <recommendedName>
        <fullName>Cytochrome c oxidase subunit 3</fullName>
        <ecNumber>7.1.1.9</ecNumber>
    </recommendedName>
    <alternativeName>
        <fullName>Cytochrome c oxidase polypeptide III</fullName>
    </alternativeName>
</protein>
<keyword id="KW-0472">Membrane</keyword>
<keyword id="KW-0496">Mitochondrion</keyword>
<keyword id="KW-0999">Mitochondrion inner membrane</keyword>
<keyword id="KW-1185">Reference proteome</keyword>
<keyword id="KW-1278">Translocase</keyword>
<keyword id="KW-0812">Transmembrane</keyword>
<keyword id="KW-1133">Transmembrane helix</keyword>
<gene>
    <name type="primary">MT-CO3</name>
    <name type="synonym">COIII</name>
    <name type="synonym">COXIII</name>
    <name type="synonym">MTCO3</name>
</gene>
<dbReference type="EC" id="7.1.1.9"/>
<dbReference type="EMBL" id="AP003195">
    <property type="protein sequence ID" value="BAB62921.1"/>
    <property type="molecule type" value="Genomic_DNA"/>
</dbReference>
<dbReference type="SMR" id="Q8SEW8"/>
<dbReference type="Ensembl" id="ENSCJPT00005000024.1">
    <property type="protein sequence ID" value="ENSCJPP00005000008.1"/>
    <property type="gene ID" value="ENSCJPG00005000024.1"/>
</dbReference>
<dbReference type="KEGG" id="cjo:804658"/>
<dbReference type="CTD" id="4514"/>
<dbReference type="GeneTree" id="ENSGT00390000013064"/>
<dbReference type="OrthoDB" id="10050457at2759"/>
<dbReference type="Proteomes" id="UP000694412">
    <property type="component" value="Unassembled WGS sequence"/>
</dbReference>
<dbReference type="GO" id="GO:0005743">
    <property type="term" value="C:mitochondrial inner membrane"/>
    <property type="evidence" value="ECO:0007669"/>
    <property type="project" value="UniProtKB-SubCell"/>
</dbReference>
<dbReference type="GO" id="GO:0045277">
    <property type="term" value="C:respiratory chain complex IV"/>
    <property type="evidence" value="ECO:0000250"/>
    <property type="project" value="UniProtKB"/>
</dbReference>
<dbReference type="GO" id="GO:0004129">
    <property type="term" value="F:cytochrome-c oxidase activity"/>
    <property type="evidence" value="ECO:0007669"/>
    <property type="project" value="UniProtKB-EC"/>
</dbReference>
<dbReference type="GO" id="GO:0006123">
    <property type="term" value="P:mitochondrial electron transport, cytochrome c to oxygen"/>
    <property type="evidence" value="ECO:0007669"/>
    <property type="project" value="TreeGrafter"/>
</dbReference>
<dbReference type="GO" id="GO:0008535">
    <property type="term" value="P:respiratory chain complex IV assembly"/>
    <property type="evidence" value="ECO:0007669"/>
    <property type="project" value="Ensembl"/>
</dbReference>
<dbReference type="CDD" id="cd01665">
    <property type="entry name" value="Cyt_c_Oxidase_III"/>
    <property type="match status" value="1"/>
</dbReference>
<dbReference type="FunFam" id="1.10.287.70:FF:000048">
    <property type="entry name" value="Cytochrome c oxidase subunit 3"/>
    <property type="match status" value="1"/>
</dbReference>
<dbReference type="FunFam" id="1.20.120.80:FF:000002">
    <property type="entry name" value="Cytochrome c oxidase subunit 3"/>
    <property type="match status" value="1"/>
</dbReference>
<dbReference type="Gene3D" id="1.10.287.70">
    <property type="match status" value="1"/>
</dbReference>
<dbReference type="Gene3D" id="1.20.120.80">
    <property type="entry name" value="Cytochrome c oxidase, subunit III, four-helix bundle"/>
    <property type="match status" value="1"/>
</dbReference>
<dbReference type="InterPro" id="IPR024791">
    <property type="entry name" value="Cyt_c/ubiquinol_Oxase_su3"/>
</dbReference>
<dbReference type="InterPro" id="IPR033945">
    <property type="entry name" value="Cyt_c_oxase_su3_dom"/>
</dbReference>
<dbReference type="InterPro" id="IPR000298">
    <property type="entry name" value="Cyt_c_oxidase-like_su3"/>
</dbReference>
<dbReference type="InterPro" id="IPR035973">
    <property type="entry name" value="Cyt_c_oxidase_su3-like_sf"/>
</dbReference>
<dbReference type="InterPro" id="IPR013833">
    <property type="entry name" value="Cyt_c_oxidase_su3_a-hlx"/>
</dbReference>
<dbReference type="PANTHER" id="PTHR11403:SF7">
    <property type="entry name" value="CYTOCHROME C OXIDASE SUBUNIT 3"/>
    <property type="match status" value="1"/>
</dbReference>
<dbReference type="PANTHER" id="PTHR11403">
    <property type="entry name" value="CYTOCHROME C OXIDASE SUBUNIT III"/>
    <property type="match status" value="1"/>
</dbReference>
<dbReference type="Pfam" id="PF00510">
    <property type="entry name" value="COX3"/>
    <property type="match status" value="1"/>
</dbReference>
<dbReference type="SUPFAM" id="SSF81452">
    <property type="entry name" value="Cytochrome c oxidase subunit III-like"/>
    <property type="match status" value="1"/>
</dbReference>
<dbReference type="PROSITE" id="PS50253">
    <property type="entry name" value="COX3"/>
    <property type="match status" value="1"/>
</dbReference>
<reference key="1">
    <citation type="journal article" date="2001" name="Anim. Genet.">
        <title>Complete sequence of the Japanese quail (Coturnix japonica) mitochondrial genome and its genetic relationship with related species.</title>
        <authorList>
            <person name="Nishibori M."/>
            <person name="Hayashi T."/>
            <person name="Tsudzuki M."/>
            <person name="Yamamoto Y."/>
            <person name="Yasue H."/>
        </authorList>
    </citation>
    <scope>NUCLEOTIDE SEQUENCE [GENOMIC DNA]</scope>
    <source>
        <tissue>Blood</tissue>
    </source>
</reference>
<geneLocation type="mitochondrion"/>
<name>COX3_COTJA</name>
<sequence>MAHQAHSYHMVDPSPWPIFGAITALLTTSGLIMWFHYNSIALLTAGLLSMLLVMIQWWRDVVRESTFQGHHTPTVQKGLRYGMILFITSEAFFFLGFFWAFFHSSLAPTPELGGQWPPTGIKPLNPLEVPLLNTAILLASGVTVTWAHHSITEGNRKQAIHALTLTILLGFYFTALQAMEYHEASFSIADSVYGSTFFVATGFHGLHVIIGSSFLTICLLRLIKFHFTSNHHFGFEAAAWYWHFVDIIWLFLYMSMYWWGS</sequence>
<feature type="chain" id="PRO_0000183759" description="Cytochrome c oxidase subunit 3">
    <location>
        <begin position="1"/>
        <end position="261"/>
    </location>
</feature>
<feature type="topological domain" description="Mitochondrial matrix" evidence="1">
    <location>
        <begin position="1"/>
        <end position="15"/>
    </location>
</feature>
<feature type="transmembrane region" description="Helical; Name=I" evidence="1">
    <location>
        <begin position="16"/>
        <end position="34"/>
    </location>
</feature>
<feature type="topological domain" description="Mitochondrial intermembrane" evidence="1">
    <location>
        <begin position="35"/>
        <end position="40"/>
    </location>
</feature>
<feature type="transmembrane region" description="Helical; Name=II" evidence="1">
    <location>
        <begin position="41"/>
        <end position="66"/>
    </location>
</feature>
<feature type="topological domain" description="Mitochondrial matrix" evidence="1">
    <location>
        <begin position="67"/>
        <end position="72"/>
    </location>
</feature>
<feature type="transmembrane region" description="Helical; Name=III" evidence="1">
    <location>
        <begin position="73"/>
        <end position="105"/>
    </location>
</feature>
<feature type="topological domain" description="Mitochondrial intermembrane" evidence="1">
    <location>
        <begin position="106"/>
        <end position="128"/>
    </location>
</feature>
<feature type="transmembrane region" description="Helical; Name=IV" evidence="1">
    <location>
        <begin position="129"/>
        <end position="152"/>
    </location>
</feature>
<feature type="topological domain" description="Mitochondrial matrix" evidence="1">
    <location>
        <begin position="153"/>
        <end position="155"/>
    </location>
</feature>
<feature type="transmembrane region" description="Helical; Name=V" evidence="1">
    <location>
        <begin position="156"/>
        <end position="183"/>
    </location>
</feature>
<feature type="topological domain" description="Mitochondrial intermembrane" evidence="1">
    <location>
        <begin position="184"/>
        <end position="190"/>
    </location>
</feature>
<feature type="transmembrane region" description="Helical; Name=VI" evidence="1">
    <location>
        <begin position="191"/>
        <end position="223"/>
    </location>
</feature>
<feature type="topological domain" description="Mitochondrial matrix" evidence="1">
    <location>
        <begin position="224"/>
        <end position="232"/>
    </location>
</feature>
<feature type="transmembrane region" description="Helical; Name=VII" evidence="1">
    <location>
        <begin position="233"/>
        <end position="256"/>
    </location>
</feature>
<feature type="topological domain" description="Mitochondrial intermembrane" evidence="1">
    <location>
        <begin position="257"/>
        <end position="261"/>
    </location>
</feature>